<dbReference type="EC" id="3.4.21.92" evidence="1"/>
<dbReference type="EMBL" id="L07793">
    <property type="protein sequence ID" value="AAA26891.1"/>
    <property type="molecule type" value="Genomic_DNA"/>
</dbReference>
<dbReference type="SMR" id="P36398"/>
<dbReference type="STRING" id="1304.HMPREF3219_0200019"/>
<dbReference type="MEROPS" id="S14.001"/>
<dbReference type="BRENDA" id="3.4.21.92">
    <property type="organism ID" value="5952"/>
</dbReference>
<dbReference type="GO" id="GO:0005737">
    <property type="term" value="C:cytoplasm"/>
    <property type="evidence" value="ECO:0007669"/>
    <property type="project" value="UniProtKB-SubCell"/>
</dbReference>
<dbReference type="GO" id="GO:0009368">
    <property type="term" value="C:endopeptidase Clp complex"/>
    <property type="evidence" value="ECO:0007669"/>
    <property type="project" value="TreeGrafter"/>
</dbReference>
<dbReference type="GO" id="GO:0004176">
    <property type="term" value="F:ATP-dependent peptidase activity"/>
    <property type="evidence" value="ECO:0007669"/>
    <property type="project" value="InterPro"/>
</dbReference>
<dbReference type="GO" id="GO:0051117">
    <property type="term" value="F:ATPase binding"/>
    <property type="evidence" value="ECO:0007669"/>
    <property type="project" value="TreeGrafter"/>
</dbReference>
<dbReference type="GO" id="GO:0004252">
    <property type="term" value="F:serine-type endopeptidase activity"/>
    <property type="evidence" value="ECO:0007669"/>
    <property type="project" value="UniProtKB-UniRule"/>
</dbReference>
<dbReference type="GO" id="GO:0006515">
    <property type="term" value="P:protein quality control for misfolded or incompletely synthesized proteins"/>
    <property type="evidence" value="ECO:0007669"/>
    <property type="project" value="TreeGrafter"/>
</dbReference>
<dbReference type="CDD" id="cd07017">
    <property type="entry name" value="S14_ClpP_2"/>
    <property type="match status" value="1"/>
</dbReference>
<dbReference type="FunFam" id="3.90.226.10:FF:000014">
    <property type="entry name" value="ATP-dependent Clp protease proteolytic subunit"/>
    <property type="match status" value="1"/>
</dbReference>
<dbReference type="Gene3D" id="3.90.226.10">
    <property type="entry name" value="2-enoyl-CoA Hydratase, Chain A, domain 1"/>
    <property type="match status" value="1"/>
</dbReference>
<dbReference type="HAMAP" id="MF_00444">
    <property type="entry name" value="ClpP"/>
    <property type="match status" value="1"/>
</dbReference>
<dbReference type="InterPro" id="IPR001907">
    <property type="entry name" value="ClpP"/>
</dbReference>
<dbReference type="InterPro" id="IPR029045">
    <property type="entry name" value="ClpP/crotonase-like_dom_sf"/>
</dbReference>
<dbReference type="InterPro" id="IPR023562">
    <property type="entry name" value="ClpP/TepA"/>
</dbReference>
<dbReference type="InterPro" id="IPR033135">
    <property type="entry name" value="ClpP_His_AS"/>
</dbReference>
<dbReference type="InterPro" id="IPR018215">
    <property type="entry name" value="ClpP_Ser_AS"/>
</dbReference>
<dbReference type="NCBIfam" id="NF001368">
    <property type="entry name" value="PRK00277.1"/>
    <property type="match status" value="1"/>
</dbReference>
<dbReference type="NCBIfam" id="NF009205">
    <property type="entry name" value="PRK12553.1"/>
    <property type="match status" value="1"/>
</dbReference>
<dbReference type="PANTHER" id="PTHR10381">
    <property type="entry name" value="ATP-DEPENDENT CLP PROTEASE PROTEOLYTIC SUBUNIT"/>
    <property type="match status" value="1"/>
</dbReference>
<dbReference type="PANTHER" id="PTHR10381:SF70">
    <property type="entry name" value="ATP-DEPENDENT CLP PROTEASE PROTEOLYTIC SUBUNIT"/>
    <property type="match status" value="1"/>
</dbReference>
<dbReference type="Pfam" id="PF00574">
    <property type="entry name" value="CLP_protease"/>
    <property type="match status" value="1"/>
</dbReference>
<dbReference type="PRINTS" id="PR00127">
    <property type="entry name" value="CLPPROTEASEP"/>
</dbReference>
<dbReference type="SUPFAM" id="SSF52096">
    <property type="entry name" value="ClpP/crotonase"/>
    <property type="match status" value="1"/>
</dbReference>
<dbReference type="PROSITE" id="PS00382">
    <property type="entry name" value="CLP_PROTEASE_HIS"/>
    <property type="match status" value="1"/>
</dbReference>
<dbReference type="PROSITE" id="PS00381">
    <property type="entry name" value="CLP_PROTEASE_SER"/>
    <property type="match status" value="1"/>
</dbReference>
<comment type="function">
    <text evidence="1">Cleaves peptides in various proteins in a process that requires ATP hydrolysis. Has a chymotrypsin-like activity. Plays a major role in the degradation of misfolded proteins.</text>
</comment>
<comment type="catalytic activity">
    <reaction evidence="1">
        <text>Hydrolysis of proteins to small peptides in the presence of ATP and magnesium. alpha-casein is the usual test substrate. In the absence of ATP, only oligopeptides shorter than five residues are hydrolyzed (such as succinyl-Leu-Tyr-|-NHMec, and Leu-Tyr-Leu-|-Tyr-Trp, in which cleavage of the -Tyr-|-Leu- and -Tyr-|-Trp bonds also occurs).</text>
        <dbReference type="EC" id="3.4.21.92"/>
    </reaction>
</comment>
<comment type="subunit">
    <text evidence="1">Fourteen ClpP subunits assemble into 2 heptameric rings which stack back to back to give a disk-like structure with a central cavity, resembling the structure of eukaryotic proteasomes.</text>
</comment>
<comment type="subcellular location">
    <subcellularLocation>
        <location evidence="1">Cytoplasm</location>
    </subcellularLocation>
</comment>
<comment type="similarity">
    <text evidence="1">Belongs to the peptidase S14 family.</text>
</comment>
<accession>P36398</accession>
<name>CLPP_STRSL</name>
<gene>
    <name evidence="1" type="primary">clpP</name>
</gene>
<reference key="1">
    <citation type="journal article" date="1993" name="J. Gen. Microbiol.">
        <title>The ftf gene encoding the cell-bound fructosyltransferase of Streptococcus salivarius ATCC 25975 is preceded by an insertion sequence and followed by FUR1 and clpP homologues.</title>
        <authorList>
            <person name="Giffard P.M."/>
            <person name="Rathsam C."/>
            <person name="Kwan E."/>
            <person name="Kwan D.W.L."/>
            <person name="Bunny K.L."/>
            <person name="Koo S.-P."/>
            <person name="Jacques N.A."/>
        </authorList>
    </citation>
    <scope>NUCLEOTIDE SEQUENCE [GENOMIC DNA]</scope>
    <source>
        <strain>ATCC 25975</strain>
    </source>
</reference>
<proteinExistence type="inferred from homology"/>
<organism>
    <name type="scientific">Streptococcus salivarius</name>
    <dbReference type="NCBI Taxonomy" id="1304"/>
    <lineage>
        <taxon>Bacteria</taxon>
        <taxon>Bacillati</taxon>
        <taxon>Bacillota</taxon>
        <taxon>Bacilli</taxon>
        <taxon>Lactobacillales</taxon>
        <taxon>Streptococcaceae</taxon>
        <taxon>Streptococcus</taxon>
    </lineage>
</organism>
<feature type="chain" id="PRO_0000179676" description="ATP-dependent Clp protease proteolytic subunit">
    <location>
        <begin position="1"/>
        <end position="196"/>
    </location>
</feature>
<feature type="active site" description="Nucleophile" evidence="1">
    <location>
        <position position="96"/>
    </location>
</feature>
<feature type="active site" evidence="1">
    <location>
        <position position="121"/>
    </location>
</feature>
<evidence type="ECO:0000255" key="1">
    <source>
        <dbReference type="HAMAP-Rule" id="MF_00444"/>
    </source>
</evidence>
<protein>
    <recommendedName>
        <fullName evidence="1">ATP-dependent Clp protease proteolytic subunit</fullName>
        <ecNumber evidence="1">3.4.21.92</ecNumber>
    </recommendedName>
    <alternativeName>
        <fullName evidence="1">Endopeptidase Clp</fullName>
    </alternativeName>
</protein>
<keyword id="KW-0963">Cytoplasm</keyword>
<keyword id="KW-0378">Hydrolase</keyword>
<keyword id="KW-0645">Protease</keyword>
<keyword id="KW-0720">Serine protease</keyword>
<sequence>MIPVVIEQTSRGEASYDIYSRLLKDRIIMLTGPVEDNMANSIIAQLLFLDAQDNTKDIYLYVNTPGGSVSAGLAIVDTMNFIKSDVQTIVMGMAASMGTVIASSGTKGKRFMLPNAEYMIHQPMGGTGGGTQQTDMAIAAEHLLKTRNNLEQILADNSGQPIEKVHVDAERDNWMSAQETLEYGFIDEIMANNQLK</sequence>